<reference key="1">
    <citation type="submission" date="2004-06" db="EMBL/GenBank/DDBJ databases">
        <authorList>
            <consortium name="NIH - Xenopus Gene Collection (XGC) project"/>
        </authorList>
    </citation>
    <scope>NUCLEOTIDE SEQUENCE [LARGE SCALE MRNA]</scope>
    <source>
        <tissue>Brain</tissue>
    </source>
</reference>
<keyword id="KW-0009">Actin-binding</keyword>
<keyword id="KW-0963">Cytoplasm</keyword>
<keyword id="KW-0539">Nucleus</keyword>
<keyword id="KW-0650">Protein phosphatase inhibitor</keyword>
<keyword id="KW-1185">Reference proteome</keyword>
<keyword id="KW-0677">Repeat</keyword>
<keyword id="KW-0770">Synapse</keyword>
<dbReference type="EMBL" id="BC074353">
    <property type="protein sequence ID" value="AAH74353.1"/>
    <property type="molecule type" value="mRNA"/>
</dbReference>
<dbReference type="RefSeq" id="NP_001086228.1">
    <property type="nucleotide sequence ID" value="NM_001092759.1"/>
</dbReference>
<dbReference type="SMR" id="Q6GLU8"/>
<dbReference type="DNASU" id="444657"/>
<dbReference type="GeneID" id="444657"/>
<dbReference type="AGR" id="Xenbase:XB-GENE-5959325"/>
<dbReference type="CTD" id="444657"/>
<dbReference type="Xenbase" id="XB-GENE-5959325">
    <property type="gene designation" value="phactr1.S"/>
</dbReference>
<dbReference type="OrthoDB" id="5563016at2759"/>
<dbReference type="Proteomes" id="UP000186698">
    <property type="component" value="Unplaced"/>
</dbReference>
<dbReference type="Bgee" id="444657">
    <property type="expression patterns" value="Expressed in brain and 19 other cell types or tissues"/>
</dbReference>
<dbReference type="GO" id="GO:0005829">
    <property type="term" value="C:cytosol"/>
    <property type="evidence" value="ECO:0000250"/>
    <property type="project" value="UniProtKB"/>
</dbReference>
<dbReference type="GO" id="GO:0005634">
    <property type="term" value="C:nucleus"/>
    <property type="evidence" value="ECO:0000250"/>
    <property type="project" value="UniProtKB"/>
</dbReference>
<dbReference type="GO" id="GO:0045202">
    <property type="term" value="C:synapse"/>
    <property type="evidence" value="ECO:0007669"/>
    <property type="project" value="UniProtKB-SubCell"/>
</dbReference>
<dbReference type="GO" id="GO:0003779">
    <property type="term" value="F:actin binding"/>
    <property type="evidence" value="ECO:0000250"/>
    <property type="project" value="UniProtKB"/>
</dbReference>
<dbReference type="GO" id="GO:0004864">
    <property type="term" value="F:protein phosphatase inhibitor activity"/>
    <property type="evidence" value="ECO:0007669"/>
    <property type="project" value="UniProtKB-KW"/>
</dbReference>
<dbReference type="GO" id="GO:0030036">
    <property type="term" value="P:actin cytoskeleton organization"/>
    <property type="evidence" value="ECO:0000250"/>
    <property type="project" value="UniProtKB"/>
</dbReference>
<dbReference type="GO" id="GO:0031032">
    <property type="term" value="P:actomyosin structure organization"/>
    <property type="evidence" value="ECO:0000250"/>
    <property type="project" value="UniProtKB"/>
</dbReference>
<dbReference type="GO" id="GO:0048870">
    <property type="term" value="P:cell motility"/>
    <property type="evidence" value="ECO:0000318"/>
    <property type="project" value="GO_Central"/>
</dbReference>
<dbReference type="GO" id="GO:0043149">
    <property type="term" value="P:stress fiber assembly"/>
    <property type="evidence" value="ECO:0000250"/>
    <property type="project" value="UniProtKB"/>
</dbReference>
<dbReference type="Gene3D" id="6.10.140.1750">
    <property type="match status" value="1"/>
</dbReference>
<dbReference type="Gene3D" id="6.10.140.2130">
    <property type="match status" value="1"/>
</dbReference>
<dbReference type="InterPro" id="IPR004018">
    <property type="entry name" value="RPEL_repeat"/>
</dbReference>
<dbReference type="PANTHER" id="PTHR12751:SF6">
    <property type="entry name" value="PHOSPHATASE AND ACTIN REGULATOR 1"/>
    <property type="match status" value="1"/>
</dbReference>
<dbReference type="PANTHER" id="PTHR12751">
    <property type="entry name" value="PHOSPHATASE AND ACTIN REGULATOR PHACTR"/>
    <property type="match status" value="1"/>
</dbReference>
<dbReference type="Pfam" id="PF02755">
    <property type="entry name" value="RPEL"/>
    <property type="match status" value="4"/>
</dbReference>
<dbReference type="SMART" id="SM00707">
    <property type="entry name" value="RPEL"/>
    <property type="match status" value="4"/>
</dbReference>
<dbReference type="PROSITE" id="PS51073">
    <property type="entry name" value="RPEL"/>
    <property type="match status" value="4"/>
</dbReference>
<evidence type="ECO:0000250" key="1"/>
<evidence type="ECO:0000256" key="2">
    <source>
        <dbReference type="SAM" id="MobiDB-lite"/>
    </source>
</evidence>
<evidence type="ECO:0000305" key="3"/>
<accession>Q6GLU8</accession>
<sequence>MAASSEEETDRRPIRRVRSKSDTPYLAEVRISLNLETAEEVERLAAMRSDSLVPGTHTPPIRRRSKFATLGRLFKPWKWRKKKSEKFKQTSAALERKISMRQSREELIKRGVLKEMYDKDGDLHNEEGLMENGQAVSSGSSSLPIITELELTSMAGDTCAYEVLPTSELMDGTVSEDLSSEPGSLSQDPSYKPAMLLPPKKTVGFPVDQEDTPVKQITLLKQPPALPPKPISRIANHIADSGAPVKLPCMPGKMSPPLPPKKVMICMPLGGTDFPYGPYSNQKSSQHHHTVLPSQLAAHQLQYGSQHFSTGSSSISIHPSIPPGCRVIEELNKTLAMTMQRLESSGLHGGESITKSGLSGYCDMRQVPTVVIECEDDKENVPHETSYDDSSCLYSRDEEEDDDDDDDDEDDDSSLYTNSLALKVLRKDSLAIKLSNRPSKRELEEKNILPMQTDEERLESRQQIGTKLTRRLSQRPTAEELEQRNILKPRNEQEEQEEKREIKRRLTRKLSQRPTVEELREKKILISFSDYVELADAQDYDRRADKPWTRLTAADKAAIRKELNEFKSTEMEVHELSRHLTRFHRP</sequence>
<gene>
    <name type="primary">phactr1</name>
</gene>
<organism>
    <name type="scientific">Xenopus laevis</name>
    <name type="common">African clawed frog</name>
    <dbReference type="NCBI Taxonomy" id="8355"/>
    <lineage>
        <taxon>Eukaryota</taxon>
        <taxon>Metazoa</taxon>
        <taxon>Chordata</taxon>
        <taxon>Craniata</taxon>
        <taxon>Vertebrata</taxon>
        <taxon>Euteleostomi</taxon>
        <taxon>Amphibia</taxon>
        <taxon>Batrachia</taxon>
        <taxon>Anura</taxon>
        <taxon>Pipoidea</taxon>
        <taxon>Pipidae</taxon>
        <taxon>Xenopodinae</taxon>
        <taxon>Xenopus</taxon>
        <taxon>Xenopus</taxon>
    </lineage>
</organism>
<protein>
    <recommendedName>
        <fullName>Phosphatase and actin regulator 1</fullName>
    </recommendedName>
</protein>
<name>PHAR1_XENLA</name>
<feature type="chain" id="PRO_0000235992" description="Phosphatase and actin regulator 1">
    <location>
        <begin position="1"/>
        <end position="586"/>
    </location>
</feature>
<feature type="repeat" description="RPEL 1">
    <location>
        <begin position="92"/>
        <end position="117"/>
    </location>
</feature>
<feature type="repeat" description="RPEL 2">
    <location>
        <begin position="428"/>
        <end position="453"/>
    </location>
</feature>
<feature type="repeat" description="RPEL 3">
    <location>
        <begin position="466"/>
        <end position="491"/>
    </location>
</feature>
<feature type="repeat" description="RPEL 4">
    <location>
        <begin position="504"/>
        <end position="529"/>
    </location>
</feature>
<feature type="region of interest" description="Disordered" evidence="2">
    <location>
        <begin position="373"/>
        <end position="414"/>
    </location>
</feature>
<feature type="short sequence motif" description="Nuclear localization signal" evidence="1">
    <location>
        <begin position="62"/>
        <end position="83"/>
    </location>
</feature>
<feature type="compositionally biased region" description="Acidic residues" evidence="2">
    <location>
        <begin position="397"/>
        <end position="413"/>
    </location>
</feature>
<proteinExistence type="evidence at transcript level"/>
<comment type="function">
    <text evidence="1">Binds actin monomers (G actin) and plays a role in the reorganization of the actin cytoskeleton and in formation of actin stress fibers.</text>
</comment>
<comment type="subunit">
    <text evidence="1">Interacts (via RPEL repeats) with ACTA1.</text>
</comment>
<comment type="subcellular location">
    <subcellularLocation>
        <location evidence="1">Cytoplasm</location>
    </subcellularLocation>
    <subcellularLocation>
        <location evidence="1">Synapse</location>
    </subcellularLocation>
    <subcellularLocation>
        <location evidence="1">Nucleus</location>
    </subcellularLocation>
    <text evidence="1">Enriched at synapses (By similarity). Cytoplasmic in resting cells, and is imported into the nucleus upon serum stimulation. Interaction with actin prevents nuclear import (By similarity).</text>
</comment>
<comment type="domain">
    <text evidence="1">Binds three actin monomers via the three C-terminal RPEL repeats.</text>
</comment>
<comment type="similarity">
    <text evidence="3">Belongs to the phosphatase and actin regulator family.</text>
</comment>